<dbReference type="EC" id="1.14.-.-" evidence="7"/>
<dbReference type="EMBL" id="DF938583">
    <property type="protein sequence ID" value="GAM84994.1"/>
    <property type="molecule type" value="Genomic_DNA"/>
</dbReference>
<dbReference type="SMR" id="A0A0S6XHQ0"/>
<dbReference type="STRING" id="1603295.A0A0S6XHQ0"/>
<dbReference type="OrthoDB" id="627829at2759"/>
<dbReference type="Proteomes" id="UP000054361">
    <property type="component" value="Unassembled WGS sequence"/>
</dbReference>
<dbReference type="GO" id="GO:0051213">
    <property type="term" value="F:dioxygenase activity"/>
    <property type="evidence" value="ECO:0007669"/>
    <property type="project" value="UniProtKB-KW"/>
</dbReference>
<dbReference type="GO" id="GO:0046872">
    <property type="term" value="F:metal ion binding"/>
    <property type="evidence" value="ECO:0007669"/>
    <property type="project" value="UniProtKB-KW"/>
</dbReference>
<dbReference type="GO" id="GO:0044283">
    <property type="term" value="P:small molecule biosynthetic process"/>
    <property type="evidence" value="ECO:0007669"/>
    <property type="project" value="UniProtKB-ARBA"/>
</dbReference>
<dbReference type="Gene3D" id="2.60.120.330">
    <property type="entry name" value="B-lactam Antibiotic, Isopenicillin N Synthase, Chain"/>
    <property type="match status" value="1"/>
</dbReference>
<dbReference type="InterPro" id="IPR026992">
    <property type="entry name" value="DIOX_N"/>
</dbReference>
<dbReference type="InterPro" id="IPR044861">
    <property type="entry name" value="IPNS-like_FE2OG_OXY"/>
</dbReference>
<dbReference type="InterPro" id="IPR027443">
    <property type="entry name" value="IPNS-like_sf"/>
</dbReference>
<dbReference type="InterPro" id="IPR005123">
    <property type="entry name" value="Oxoglu/Fe-dep_dioxygenase_dom"/>
</dbReference>
<dbReference type="PANTHER" id="PTHR10209:SF812">
    <property type="entry name" value="2OG-FE(II) OXYGENASE FAMILY, PUTATIVE (AFU_ORTHOLOGUE AFUA_3G14880)-RELATED"/>
    <property type="match status" value="1"/>
</dbReference>
<dbReference type="PANTHER" id="PTHR10209">
    <property type="entry name" value="OXIDOREDUCTASE, 2OG-FE II OXYGENASE FAMILY PROTEIN"/>
    <property type="match status" value="1"/>
</dbReference>
<dbReference type="Pfam" id="PF03171">
    <property type="entry name" value="2OG-FeII_Oxy"/>
    <property type="match status" value="1"/>
</dbReference>
<dbReference type="Pfam" id="PF14226">
    <property type="entry name" value="DIOX_N"/>
    <property type="match status" value="1"/>
</dbReference>
<dbReference type="SUPFAM" id="SSF51197">
    <property type="entry name" value="Clavaminate synthase-like"/>
    <property type="match status" value="1"/>
</dbReference>
<dbReference type="PROSITE" id="PS51471">
    <property type="entry name" value="FE2OG_OXY"/>
    <property type="match status" value="1"/>
</dbReference>
<feature type="chain" id="PRO_0000454570" description="2-oxoglutarate-dependent dioxygenase frbJ">
    <location>
        <begin position="1"/>
        <end position="368"/>
    </location>
</feature>
<feature type="domain" description="Fe2OG dioxygenase" evidence="1">
    <location>
        <begin position="171"/>
        <end position="277"/>
    </location>
</feature>
<feature type="binding site" evidence="1">
    <location>
        <position position="198"/>
    </location>
    <ligand>
        <name>Fe cation</name>
        <dbReference type="ChEBI" id="CHEBI:24875"/>
    </ligand>
</feature>
<feature type="binding site" evidence="1">
    <location>
        <position position="200"/>
    </location>
    <ligand>
        <name>Fe cation</name>
        <dbReference type="ChEBI" id="CHEBI:24875"/>
    </ligand>
</feature>
<feature type="binding site" evidence="1">
    <location>
        <position position="256"/>
    </location>
    <ligand>
        <name>Fe cation</name>
        <dbReference type="ChEBI" id="CHEBI:24875"/>
    </ligand>
</feature>
<feature type="binding site" evidence="1">
    <location>
        <position position="268"/>
    </location>
    <ligand>
        <name>2-oxoglutarate</name>
        <dbReference type="ChEBI" id="CHEBI:16810"/>
    </ligand>
</feature>
<keyword id="KW-0223">Dioxygenase</keyword>
<keyword id="KW-0408">Iron</keyword>
<keyword id="KW-0479">Metal-binding</keyword>
<keyword id="KW-0560">Oxidoreductase</keyword>
<keyword id="KW-1185">Reference proteome</keyword>
<proteinExistence type="evidence at protein level"/>
<reference key="1">
    <citation type="journal article" date="2015" name="Genome Announc.">
        <title>Genome sequence of fungal species No.11243, which produces the antifungal antibiotic FR901469.</title>
        <authorList>
            <person name="Matsui M."/>
            <person name="Yokoyama T."/>
            <person name="Nemoto K."/>
            <person name="Kumagai T."/>
            <person name="Terai G."/>
            <person name="Arita M."/>
            <person name="Machida M."/>
            <person name="Shibata T."/>
        </authorList>
    </citation>
    <scope>NUCLEOTIDE SEQUENCE [LARGE SCALE GENOMIC DNA]</scope>
</reference>
<reference key="2">
    <citation type="journal article" date="2000" name="J. Antibiot.">
        <title>FR901469, a novel antifungal antibiotic from an unidentified fungus No.11243. I. Taxonomy, fermentation, isolation, physico-chemical properties and biological properties.</title>
        <authorList>
            <person name="Fujie A."/>
            <person name="Iwamoto T."/>
            <person name="Muramatsu H."/>
            <person name="Okudaira T."/>
            <person name="Nitta K."/>
            <person name="Nakanishi T."/>
            <person name="Sakamoto K."/>
            <person name="Hori Y."/>
            <person name="Hino M."/>
            <person name="Hashimoto S."/>
            <person name="Okuhara M."/>
        </authorList>
    </citation>
    <scope>BIOTECHNOLOGY</scope>
</reference>
<reference key="3">
    <citation type="journal article" date="2000" name="J. Antibiot.">
        <title>FR901469, a novel antifungal antibiotic from an unidentified fungus No.11243. II. In vitro and in vivo activities.</title>
        <authorList>
            <person name="Fujie A."/>
            <person name="Iwamoto T."/>
            <person name="Muramatsu H."/>
            <person name="Okudaira T."/>
            <person name="Sato I."/>
            <person name="Furuta T."/>
            <person name="Tsurumi Y."/>
            <person name="Hori Y."/>
            <person name="Hino M."/>
            <person name="Hashimoto S."/>
            <person name="Okuhara M."/>
        </authorList>
    </citation>
    <scope>BIOTECHNOLOGY</scope>
</reference>
<reference key="4">
    <citation type="journal article" date="2017" name="J. Biosci. Bioeng.">
        <title>Identification of a putative FR901469 biosynthesis gene cluster in fungal sp. No. 11243 and enhancement of the productivity by overexpressing the transcription factor gene frbF.</title>
        <authorList>
            <person name="Matsui M."/>
            <person name="Yokoyama T."/>
            <person name="Nemoto K."/>
            <person name="Kumagai T."/>
            <person name="Terai G."/>
            <person name="Tamano K."/>
            <person name="Machida M."/>
            <person name="Shibata T."/>
        </authorList>
    </citation>
    <scope>FUNCTION</scope>
    <scope>PATHWAY</scope>
</reference>
<organism>
    <name type="scientific">Dothideomycetidae sp. (strain 11243)</name>
    <name type="common">Fungal sp. (strain No.11243)</name>
    <dbReference type="NCBI Taxonomy" id="1603295"/>
    <lineage>
        <taxon>Eukaryota</taxon>
        <taxon>Fungi</taxon>
        <taxon>Dikarya</taxon>
        <taxon>Ascomycota</taxon>
        <taxon>Pezizomycotina</taxon>
        <taxon>Dothideomycetes</taxon>
        <taxon>Dothideomycetidae</taxon>
    </lineage>
</organism>
<accession>A0A0S6XHQ0</accession>
<sequence>MSFDSIPILDLSLARNEETKPAFLRDLRHTLLEVGFLYIKNTGIPETLISDVIAQGKAFFDLPDEEKLAIEMKNKPSFLGYSRLGMEVTRFKVDWREQLDLSTPHPMPGPDDPLYYNLLAPNQWPSTPGFREVYEDYMTRMGKMSIEFTSLIAEAIGLPADAFDRFFDASQQHKLKIVKYPDLAELGVEGEAQGVGPHKDSMLTSYLLQASHHRGLQVQNHEGEWIDCPPIDGTLVVAVGQGMQALTRGVCLSTTHRVLSPARGAGARYSIPFFQGVSYDATFESMDVPESVTALRDEVQARRGAKQDDVEFTFRPGQWDHLGSATLYNRIKSHPDVGEKWDQYPEILAGIRKQHAQQGHVSEALPSG</sequence>
<comment type="function">
    <text evidence="4 7">2-oxoglutarate-dependent dioxygenase; part of the gene cluster that mediates the biosynthesis of the antifungal antibiotic FR901469, an inhibitor of beta-1,3-glucansynthase, exerting antifungal activity against the pathogenes Candida albicans and Aspergillus fumigatus (PubMed:27660098). FR901469 is a cyclic depsipeptide containing 12 amino acid residues and a fatty acid chain (PubMed:27660098). The NRPS frbI contains 12 modules responsible for the formation of the depsipeptide backbone which is denoted as Acyl-Thr-Ala-Tyr-Val-4OHPro-Thr-Thr-3OHPro-threo3OHGln-Gly-Thr-Orn-OH (C71H116N14O23) (Probable). The PKS frbB is probably involved in the production of the hydrocarbon chain, and the acyl-CoA ligase frbC might be involved in the transport of the chain to the peptide ptoduct of frbI (Probable). Because FR901469 contains 3 hydroxylated amino acid residues, the 3 oxygenases frbA, frbH, and frbJ might be participating in amino acid hydroxylation (Probable). As no thioesterase domains were detected in frbI or frbB, the thioesterases frbD and frbE may instead release and cyclize the products of the NRPS and PKS, respectively (Probable).</text>
</comment>
<comment type="pathway">
    <text evidence="7">Antifungal biosynthesis.</text>
</comment>
<comment type="biotechnology">
    <text evidence="2 3">FR901469 inhibits the activity of 1,3-beta-glucan synthase from Candida albicans and Aspergillus fumigatus (PubMed:11099224, PubMed:11099225). With minimal inhibitory concentrations (MICs) against Candida albicans and Aspergillus fumigatus of 0.63 ug/ml and 0.16 ug/ml, repectively, FR901469 displays greater inhibitory activity than other 1,3-beta-glucan synthase inhibitors such as, WF11899A, echinocandin B, aculeacin A, and papulacandin B (PubMed:11099224, PubMed:11099225).</text>
</comment>
<comment type="similarity">
    <text evidence="6">Belongs to the iron/ascorbate-dependent oxidoreductase family.</text>
</comment>
<gene>
    <name evidence="5" type="primary">frbJ</name>
    <name type="ORF">ANO11243_029970</name>
</gene>
<name>FRBJ_DOTX1</name>
<protein>
    <recommendedName>
        <fullName evidence="5">2-oxoglutarate-dependent dioxygenase frbJ</fullName>
        <ecNumber evidence="7">1.14.-.-</ecNumber>
    </recommendedName>
    <alternativeName>
        <fullName evidence="5">FR901469 biosynthesis cluster protein J</fullName>
    </alternativeName>
</protein>
<evidence type="ECO:0000255" key="1">
    <source>
        <dbReference type="PROSITE-ProRule" id="PRU00805"/>
    </source>
</evidence>
<evidence type="ECO:0000269" key="2">
    <source>
    </source>
</evidence>
<evidence type="ECO:0000269" key="3">
    <source>
    </source>
</evidence>
<evidence type="ECO:0000269" key="4">
    <source>
    </source>
</evidence>
<evidence type="ECO:0000303" key="5">
    <source>
    </source>
</evidence>
<evidence type="ECO:0000305" key="6"/>
<evidence type="ECO:0000305" key="7">
    <source>
    </source>
</evidence>